<keyword id="KW-0143">Chaperone</keyword>
<keyword id="KW-0963">Cytoplasm</keyword>
<keyword id="KW-0235">DNA replication</keyword>
<keyword id="KW-0479">Metal-binding</keyword>
<keyword id="KW-0677">Repeat</keyword>
<keyword id="KW-0346">Stress response</keyword>
<keyword id="KW-0862">Zinc</keyword>
<keyword id="KW-0863">Zinc-finger</keyword>
<name>DNAJ_HALMT</name>
<feature type="chain" id="PRO_0000070946" description="Chaperone protein DnaJ">
    <location>
        <begin position="1"/>
        <end position="384"/>
    </location>
</feature>
<feature type="domain" description="J" evidence="1">
    <location>
        <begin position="4"/>
        <end position="68"/>
    </location>
</feature>
<feature type="repeat" description="CXXCXGXG motif">
    <location>
        <begin position="160"/>
        <end position="167"/>
    </location>
</feature>
<feature type="repeat" description="CXXCXGXG motif">
    <location>
        <begin position="177"/>
        <end position="184"/>
    </location>
</feature>
<feature type="repeat" description="CXXCXGXG motif">
    <location>
        <begin position="203"/>
        <end position="210"/>
    </location>
</feature>
<feature type="repeat" description="CXXCXGXG motif">
    <location>
        <begin position="217"/>
        <end position="224"/>
    </location>
</feature>
<feature type="zinc finger region" description="CR-type" evidence="1">
    <location>
        <begin position="147"/>
        <end position="229"/>
    </location>
</feature>
<feature type="region of interest" description="Disordered" evidence="2">
    <location>
        <begin position="74"/>
        <end position="105"/>
    </location>
</feature>
<feature type="region of interest" description="Disordered" evidence="2">
    <location>
        <begin position="113"/>
        <end position="132"/>
    </location>
</feature>
<feature type="compositionally biased region" description="Gly residues" evidence="2">
    <location>
        <begin position="79"/>
        <end position="105"/>
    </location>
</feature>
<feature type="binding site" evidence="1">
    <location>
        <position position="160"/>
    </location>
    <ligand>
        <name>Zn(2+)</name>
        <dbReference type="ChEBI" id="CHEBI:29105"/>
        <label>1</label>
    </ligand>
</feature>
<feature type="binding site" evidence="1">
    <location>
        <position position="163"/>
    </location>
    <ligand>
        <name>Zn(2+)</name>
        <dbReference type="ChEBI" id="CHEBI:29105"/>
        <label>1</label>
    </ligand>
</feature>
<feature type="binding site" evidence="1">
    <location>
        <position position="177"/>
    </location>
    <ligand>
        <name>Zn(2+)</name>
        <dbReference type="ChEBI" id="CHEBI:29105"/>
        <label>2</label>
    </ligand>
</feature>
<feature type="binding site" evidence="1">
    <location>
        <position position="180"/>
    </location>
    <ligand>
        <name>Zn(2+)</name>
        <dbReference type="ChEBI" id="CHEBI:29105"/>
        <label>2</label>
    </ligand>
</feature>
<feature type="binding site" evidence="1">
    <location>
        <position position="203"/>
    </location>
    <ligand>
        <name>Zn(2+)</name>
        <dbReference type="ChEBI" id="CHEBI:29105"/>
        <label>2</label>
    </ligand>
</feature>
<feature type="binding site" evidence="1">
    <location>
        <position position="206"/>
    </location>
    <ligand>
        <name>Zn(2+)</name>
        <dbReference type="ChEBI" id="CHEBI:29105"/>
        <label>2</label>
    </ligand>
</feature>
<feature type="binding site" evidence="1">
    <location>
        <position position="217"/>
    </location>
    <ligand>
        <name>Zn(2+)</name>
        <dbReference type="ChEBI" id="CHEBI:29105"/>
        <label>1</label>
    </ligand>
</feature>
<feature type="binding site" evidence="1">
    <location>
        <position position="220"/>
    </location>
    <ligand>
        <name>Zn(2+)</name>
        <dbReference type="ChEBI" id="CHEBI:29105"/>
        <label>1</label>
    </ligand>
</feature>
<evidence type="ECO:0000255" key="1">
    <source>
        <dbReference type="HAMAP-Rule" id="MF_01152"/>
    </source>
</evidence>
<evidence type="ECO:0000256" key="2">
    <source>
        <dbReference type="SAM" id="MobiDB-lite"/>
    </source>
</evidence>
<sequence length="384" mass="41783">MSEDFYDVLGVSRDASKDQIKNAYRKKAAKYHPDVSDEEDAEEKFKKVQKAKEVLTDDEKRQMYDQLGHERFQQAQKRGAGGGGGGRGQGNPFGGGGNPFGGMGGGGFEDIFNNLFNGGGGQRRSRPQQGRDVAQRITIDLEDAYHGVERDVTIRRREVCPECDGEGHPADADVNTCSECNGSGQQTTVQQTPFGRVQQTTTCRACGGEGKTYSEDCSECRGSGRVRRTRDVTITIPAGFRDGQRLRYRGEGEPGENGGPNGDLFVEVNVRDHEEFDRDGDDLQYTHPISFPQAVFGATVEVPTLDGEAELKVPAGTQSGSTFTVSGAGMPHLDGRGNGDLHVEIHVVTPEDLNSEQREALKQFAEAGGEEVKESLFQKLKNSL</sequence>
<protein>
    <recommendedName>
        <fullName evidence="1">Chaperone protein DnaJ</fullName>
    </recommendedName>
</protein>
<gene>
    <name evidence="1" type="primary">dnaJ</name>
    <name type="synonym">hsp40</name>
    <name type="ordered locus">HFX_1648</name>
</gene>
<reference key="1">
    <citation type="submission" date="1998-06" db="EMBL/GenBank/DDBJ databases">
        <title>Organization of the DNAK locus of the archeabacterial halophile, Haloferax mediterranei.</title>
        <authorList>
            <person name="Kazi A.S."/>
            <person name="Nair C.K.K."/>
        </authorList>
    </citation>
    <scope>NUCLEOTIDE SEQUENCE [GENOMIC DNA]</scope>
    <source>
        <strain>ATCC 33500 / DSM 1411 / JCM 8866 / NBRC 14739 / NCIMB 2177 / R-4</strain>
    </source>
</reference>
<reference key="2">
    <citation type="journal article" date="2012" name="J. Bacteriol.">
        <title>Complete genome sequence of the metabolically versatile halophilic archaeon Haloferax mediterranei, a poly(3-hydroxybutyrate-co-3-hydroxyvalerate) producer.</title>
        <authorList>
            <person name="Han J."/>
            <person name="Zhang F."/>
            <person name="Hou J."/>
            <person name="Liu X."/>
            <person name="Li M."/>
            <person name="Liu H."/>
            <person name="Cai L."/>
            <person name="Zhang B."/>
            <person name="Chen Y."/>
            <person name="Zhou J."/>
            <person name="Hu S."/>
            <person name="Xiang H."/>
        </authorList>
    </citation>
    <scope>NUCLEOTIDE SEQUENCE [LARGE SCALE GENOMIC DNA]</scope>
    <source>
        <strain>ATCC 33500 / DSM 1411 / JCM 8866 / NBRC 14739 / NCIMB 2177 / R-4</strain>
    </source>
</reference>
<accession>Q9HHB8</accession>
<accession>I3R543</accession>
<organism>
    <name type="scientific">Haloferax mediterranei (strain ATCC 33500 / DSM 1411 / JCM 8866 / NBRC 14739 / NCIMB 2177 / R-4)</name>
    <name type="common">Halobacterium mediterranei</name>
    <dbReference type="NCBI Taxonomy" id="523841"/>
    <lineage>
        <taxon>Archaea</taxon>
        <taxon>Methanobacteriati</taxon>
        <taxon>Methanobacteriota</taxon>
        <taxon>Stenosarchaea group</taxon>
        <taxon>Halobacteria</taxon>
        <taxon>Halobacteriales</taxon>
        <taxon>Haloferacaceae</taxon>
        <taxon>Haloferax</taxon>
    </lineage>
</organism>
<comment type="function">
    <text evidence="1">Participates actively in the response to hyperosmotic and heat shock by preventing the aggregation of stress-denatured proteins and by disaggregating proteins, also in an autonomous, DnaK-independent fashion. Unfolded proteins bind initially to DnaJ; upon interaction with the DnaJ-bound protein, DnaK hydrolyzes its bound ATP, resulting in the formation of a stable complex. GrpE releases ADP from DnaK; ATP binding to DnaK triggers the release of the substrate protein, thus completing the reaction cycle. Several rounds of ATP-dependent interactions between DnaJ, DnaK and GrpE are required for fully efficient folding. Also involved, together with DnaK and GrpE, in the DNA replication of plasmids through activation of initiation proteins.</text>
</comment>
<comment type="cofactor">
    <cofactor evidence="1">
        <name>Zn(2+)</name>
        <dbReference type="ChEBI" id="CHEBI:29105"/>
    </cofactor>
    <text evidence="1">Binds 2 Zn(2+) ions per monomer.</text>
</comment>
<comment type="subunit">
    <text evidence="1">Homodimer.</text>
</comment>
<comment type="subcellular location">
    <subcellularLocation>
        <location evidence="1">Cytoplasm</location>
    </subcellularLocation>
</comment>
<comment type="domain">
    <text evidence="1">The J domain is necessary and sufficient to stimulate DnaK ATPase activity. Zinc center 1 plays an important role in the autonomous, DnaK-independent chaperone activity of DnaJ. Zinc center 2 is essential for interaction with DnaK and for DnaJ activity.</text>
</comment>
<comment type="similarity">
    <text evidence="1">Belongs to the DnaJ family.</text>
</comment>
<dbReference type="EMBL" id="AF069527">
    <property type="protein sequence ID" value="AAG23116.1"/>
    <property type="molecule type" value="Genomic_DNA"/>
</dbReference>
<dbReference type="EMBL" id="CP001868">
    <property type="protein sequence ID" value="AFK19353.1"/>
    <property type="molecule type" value="Genomic_DNA"/>
</dbReference>
<dbReference type="RefSeq" id="WP_004056757.1">
    <property type="nucleotide sequence ID" value="NC_017941.2"/>
</dbReference>
<dbReference type="SMR" id="Q9HHB8"/>
<dbReference type="STRING" id="523841.HFX_1648"/>
<dbReference type="PaxDb" id="523841-HFX_1648"/>
<dbReference type="GeneID" id="40157006"/>
<dbReference type="KEGG" id="hme:HFX_1648"/>
<dbReference type="eggNOG" id="arCOG02846">
    <property type="taxonomic scope" value="Archaea"/>
</dbReference>
<dbReference type="eggNOG" id="arCOG06880">
    <property type="taxonomic scope" value="Archaea"/>
</dbReference>
<dbReference type="HOGENOM" id="CLU_017633_0_7_2"/>
<dbReference type="OrthoDB" id="8967at2157"/>
<dbReference type="Proteomes" id="UP000006469">
    <property type="component" value="Chromosome"/>
</dbReference>
<dbReference type="GO" id="GO:0005737">
    <property type="term" value="C:cytoplasm"/>
    <property type="evidence" value="ECO:0007669"/>
    <property type="project" value="UniProtKB-SubCell"/>
</dbReference>
<dbReference type="GO" id="GO:0005524">
    <property type="term" value="F:ATP binding"/>
    <property type="evidence" value="ECO:0007669"/>
    <property type="project" value="InterPro"/>
</dbReference>
<dbReference type="GO" id="GO:0031072">
    <property type="term" value="F:heat shock protein binding"/>
    <property type="evidence" value="ECO:0007669"/>
    <property type="project" value="InterPro"/>
</dbReference>
<dbReference type="GO" id="GO:0051082">
    <property type="term" value="F:unfolded protein binding"/>
    <property type="evidence" value="ECO:0007669"/>
    <property type="project" value="UniProtKB-UniRule"/>
</dbReference>
<dbReference type="GO" id="GO:0008270">
    <property type="term" value="F:zinc ion binding"/>
    <property type="evidence" value="ECO:0007669"/>
    <property type="project" value="UniProtKB-UniRule"/>
</dbReference>
<dbReference type="GO" id="GO:0051085">
    <property type="term" value="P:chaperone cofactor-dependent protein refolding"/>
    <property type="evidence" value="ECO:0007669"/>
    <property type="project" value="TreeGrafter"/>
</dbReference>
<dbReference type="GO" id="GO:0006260">
    <property type="term" value="P:DNA replication"/>
    <property type="evidence" value="ECO:0007669"/>
    <property type="project" value="UniProtKB-KW"/>
</dbReference>
<dbReference type="GO" id="GO:0042026">
    <property type="term" value="P:protein refolding"/>
    <property type="evidence" value="ECO:0007669"/>
    <property type="project" value="TreeGrafter"/>
</dbReference>
<dbReference type="GO" id="GO:0009408">
    <property type="term" value="P:response to heat"/>
    <property type="evidence" value="ECO:0007669"/>
    <property type="project" value="InterPro"/>
</dbReference>
<dbReference type="CDD" id="cd06257">
    <property type="entry name" value="DnaJ"/>
    <property type="match status" value="1"/>
</dbReference>
<dbReference type="CDD" id="cd10747">
    <property type="entry name" value="DnaJ_C"/>
    <property type="match status" value="1"/>
</dbReference>
<dbReference type="CDD" id="cd10719">
    <property type="entry name" value="DnaJ_zf"/>
    <property type="match status" value="1"/>
</dbReference>
<dbReference type="FunFam" id="2.60.260.20:FF:000005">
    <property type="entry name" value="Chaperone protein dnaJ 1, mitochondrial"/>
    <property type="match status" value="1"/>
</dbReference>
<dbReference type="FunFam" id="2.10.230.10:FF:000002">
    <property type="entry name" value="Molecular chaperone DnaJ"/>
    <property type="match status" value="1"/>
</dbReference>
<dbReference type="Gene3D" id="1.10.287.110">
    <property type="entry name" value="DnaJ domain"/>
    <property type="match status" value="1"/>
</dbReference>
<dbReference type="Gene3D" id="2.10.230.10">
    <property type="entry name" value="Heat shock protein DnaJ, cysteine-rich domain"/>
    <property type="match status" value="1"/>
</dbReference>
<dbReference type="Gene3D" id="2.60.260.20">
    <property type="entry name" value="Urease metallochaperone UreE, N-terminal domain"/>
    <property type="match status" value="2"/>
</dbReference>
<dbReference type="HAMAP" id="MF_01152">
    <property type="entry name" value="DnaJ"/>
    <property type="match status" value="1"/>
</dbReference>
<dbReference type="InterPro" id="IPR012724">
    <property type="entry name" value="DnaJ"/>
</dbReference>
<dbReference type="InterPro" id="IPR002939">
    <property type="entry name" value="DnaJ_C"/>
</dbReference>
<dbReference type="InterPro" id="IPR001623">
    <property type="entry name" value="DnaJ_domain"/>
</dbReference>
<dbReference type="InterPro" id="IPR008971">
    <property type="entry name" value="HSP40/DnaJ_pept-bd"/>
</dbReference>
<dbReference type="InterPro" id="IPR001305">
    <property type="entry name" value="HSP_DnaJ_Cys-rich_dom"/>
</dbReference>
<dbReference type="InterPro" id="IPR036410">
    <property type="entry name" value="HSP_DnaJ_Cys-rich_dom_sf"/>
</dbReference>
<dbReference type="InterPro" id="IPR036869">
    <property type="entry name" value="J_dom_sf"/>
</dbReference>
<dbReference type="NCBIfam" id="TIGR02349">
    <property type="entry name" value="DnaJ_bact"/>
    <property type="match status" value="1"/>
</dbReference>
<dbReference type="NCBIfam" id="NF008035">
    <property type="entry name" value="PRK10767.1"/>
    <property type="match status" value="1"/>
</dbReference>
<dbReference type="PANTHER" id="PTHR43096">
    <property type="entry name" value="DNAJ HOMOLOG 1, MITOCHONDRIAL-RELATED"/>
    <property type="match status" value="1"/>
</dbReference>
<dbReference type="PANTHER" id="PTHR43096:SF52">
    <property type="entry name" value="DNAJ HOMOLOG 1, MITOCHONDRIAL-RELATED"/>
    <property type="match status" value="1"/>
</dbReference>
<dbReference type="Pfam" id="PF00226">
    <property type="entry name" value="DnaJ"/>
    <property type="match status" value="1"/>
</dbReference>
<dbReference type="Pfam" id="PF01556">
    <property type="entry name" value="DnaJ_C"/>
    <property type="match status" value="1"/>
</dbReference>
<dbReference type="Pfam" id="PF00684">
    <property type="entry name" value="DnaJ_CXXCXGXG"/>
    <property type="match status" value="1"/>
</dbReference>
<dbReference type="PRINTS" id="PR00625">
    <property type="entry name" value="JDOMAIN"/>
</dbReference>
<dbReference type="SMART" id="SM00271">
    <property type="entry name" value="DnaJ"/>
    <property type="match status" value="1"/>
</dbReference>
<dbReference type="SUPFAM" id="SSF46565">
    <property type="entry name" value="Chaperone J-domain"/>
    <property type="match status" value="1"/>
</dbReference>
<dbReference type="SUPFAM" id="SSF57938">
    <property type="entry name" value="DnaJ/Hsp40 cysteine-rich domain"/>
    <property type="match status" value="1"/>
</dbReference>
<dbReference type="SUPFAM" id="SSF49493">
    <property type="entry name" value="HSP40/DnaJ peptide-binding domain"/>
    <property type="match status" value="2"/>
</dbReference>
<dbReference type="PROSITE" id="PS50076">
    <property type="entry name" value="DNAJ_2"/>
    <property type="match status" value="1"/>
</dbReference>
<dbReference type="PROSITE" id="PS51188">
    <property type="entry name" value="ZF_CR"/>
    <property type="match status" value="1"/>
</dbReference>
<proteinExistence type="inferred from homology"/>